<organism>
    <name type="scientific">Staphylococcus aureus (strain Mu3 / ATCC 700698)</name>
    <dbReference type="NCBI Taxonomy" id="418127"/>
    <lineage>
        <taxon>Bacteria</taxon>
        <taxon>Bacillati</taxon>
        <taxon>Bacillota</taxon>
        <taxon>Bacilli</taxon>
        <taxon>Bacillales</taxon>
        <taxon>Staphylococcaceae</taxon>
        <taxon>Staphylococcus</taxon>
    </lineage>
</organism>
<dbReference type="EC" id="7.1.2.2" evidence="1"/>
<dbReference type="EMBL" id="AP009324">
    <property type="protein sequence ID" value="BAF78972.1"/>
    <property type="molecule type" value="Genomic_DNA"/>
</dbReference>
<dbReference type="RefSeq" id="WP_000974881.1">
    <property type="nucleotide sequence ID" value="NZ_CTYB01000015.1"/>
</dbReference>
<dbReference type="SMR" id="A7X4U5"/>
<dbReference type="KEGG" id="saw:SAHV_2089"/>
<dbReference type="HOGENOM" id="CLU_010091_2_1_9"/>
<dbReference type="GO" id="GO:0005886">
    <property type="term" value="C:plasma membrane"/>
    <property type="evidence" value="ECO:0007669"/>
    <property type="project" value="UniProtKB-SubCell"/>
</dbReference>
<dbReference type="GO" id="GO:0045259">
    <property type="term" value="C:proton-transporting ATP synthase complex"/>
    <property type="evidence" value="ECO:0007669"/>
    <property type="project" value="UniProtKB-KW"/>
</dbReference>
<dbReference type="GO" id="GO:0043531">
    <property type="term" value="F:ADP binding"/>
    <property type="evidence" value="ECO:0007669"/>
    <property type="project" value="TreeGrafter"/>
</dbReference>
<dbReference type="GO" id="GO:0005524">
    <property type="term" value="F:ATP binding"/>
    <property type="evidence" value="ECO:0007669"/>
    <property type="project" value="UniProtKB-UniRule"/>
</dbReference>
<dbReference type="GO" id="GO:0046933">
    <property type="term" value="F:proton-transporting ATP synthase activity, rotational mechanism"/>
    <property type="evidence" value="ECO:0007669"/>
    <property type="project" value="UniProtKB-UniRule"/>
</dbReference>
<dbReference type="CDD" id="cd18113">
    <property type="entry name" value="ATP-synt_F1_alpha_C"/>
    <property type="match status" value="1"/>
</dbReference>
<dbReference type="CDD" id="cd18116">
    <property type="entry name" value="ATP-synt_F1_alpha_N"/>
    <property type="match status" value="1"/>
</dbReference>
<dbReference type="CDD" id="cd01132">
    <property type="entry name" value="F1-ATPase_alpha_CD"/>
    <property type="match status" value="1"/>
</dbReference>
<dbReference type="FunFam" id="1.20.150.20:FF:000001">
    <property type="entry name" value="ATP synthase subunit alpha"/>
    <property type="match status" value="1"/>
</dbReference>
<dbReference type="FunFam" id="2.40.30.20:FF:000001">
    <property type="entry name" value="ATP synthase subunit alpha"/>
    <property type="match status" value="1"/>
</dbReference>
<dbReference type="FunFam" id="3.40.50.300:FF:000002">
    <property type="entry name" value="ATP synthase subunit alpha"/>
    <property type="match status" value="1"/>
</dbReference>
<dbReference type="Gene3D" id="2.40.30.20">
    <property type="match status" value="1"/>
</dbReference>
<dbReference type="Gene3D" id="1.20.150.20">
    <property type="entry name" value="ATP synthase alpha/beta chain, C-terminal domain"/>
    <property type="match status" value="1"/>
</dbReference>
<dbReference type="Gene3D" id="3.40.50.300">
    <property type="entry name" value="P-loop containing nucleotide triphosphate hydrolases"/>
    <property type="match status" value="1"/>
</dbReference>
<dbReference type="HAMAP" id="MF_01346">
    <property type="entry name" value="ATP_synth_alpha_bact"/>
    <property type="match status" value="1"/>
</dbReference>
<dbReference type="InterPro" id="IPR023366">
    <property type="entry name" value="ATP_synth_asu-like_sf"/>
</dbReference>
<dbReference type="InterPro" id="IPR000793">
    <property type="entry name" value="ATP_synth_asu_C"/>
</dbReference>
<dbReference type="InterPro" id="IPR038376">
    <property type="entry name" value="ATP_synth_asu_C_sf"/>
</dbReference>
<dbReference type="InterPro" id="IPR033732">
    <property type="entry name" value="ATP_synth_F1_a_nt-bd_dom"/>
</dbReference>
<dbReference type="InterPro" id="IPR005294">
    <property type="entry name" value="ATP_synth_F1_asu"/>
</dbReference>
<dbReference type="InterPro" id="IPR020003">
    <property type="entry name" value="ATPase_a/bsu_AS"/>
</dbReference>
<dbReference type="InterPro" id="IPR004100">
    <property type="entry name" value="ATPase_F1/V1/A1_a/bsu_N"/>
</dbReference>
<dbReference type="InterPro" id="IPR036121">
    <property type="entry name" value="ATPase_F1/V1/A1_a/bsu_N_sf"/>
</dbReference>
<dbReference type="InterPro" id="IPR000194">
    <property type="entry name" value="ATPase_F1/V1/A1_a/bsu_nucl-bd"/>
</dbReference>
<dbReference type="InterPro" id="IPR027417">
    <property type="entry name" value="P-loop_NTPase"/>
</dbReference>
<dbReference type="NCBIfam" id="TIGR00962">
    <property type="entry name" value="atpA"/>
    <property type="match status" value="1"/>
</dbReference>
<dbReference type="NCBIfam" id="NF009884">
    <property type="entry name" value="PRK13343.1"/>
    <property type="match status" value="1"/>
</dbReference>
<dbReference type="PANTHER" id="PTHR48082">
    <property type="entry name" value="ATP SYNTHASE SUBUNIT ALPHA, MITOCHONDRIAL"/>
    <property type="match status" value="1"/>
</dbReference>
<dbReference type="PANTHER" id="PTHR48082:SF2">
    <property type="entry name" value="ATP SYNTHASE SUBUNIT ALPHA, MITOCHONDRIAL"/>
    <property type="match status" value="1"/>
</dbReference>
<dbReference type="Pfam" id="PF00006">
    <property type="entry name" value="ATP-synt_ab"/>
    <property type="match status" value="1"/>
</dbReference>
<dbReference type="Pfam" id="PF00306">
    <property type="entry name" value="ATP-synt_ab_C"/>
    <property type="match status" value="1"/>
</dbReference>
<dbReference type="Pfam" id="PF02874">
    <property type="entry name" value="ATP-synt_ab_N"/>
    <property type="match status" value="1"/>
</dbReference>
<dbReference type="PIRSF" id="PIRSF039088">
    <property type="entry name" value="F_ATPase_subunit_alpha"/>
    <property type="match status" value="1"/>
</dbReference>
<dbReference type="SUPFAM" id="SSF47917">
    <property type="entry name" value="C-terminal domain of alpha and beta subunits of F1 ATP synthase"/>
    <property type="match status" value="1"/>
</dbReference>
<dbReference type="SUPFAM" id="SSF50615">
    <property type="entry name" value="N-terminal domain of alpha and beta subunits of F1 ATP synthase"/>
    <property type="match status" value="1"/>
</dbReference>
<dbReference type="SUPFAM" id="SSF52540">
    <property type="entry name" value="P-loop containing nucleoside triphosphate hydrolases"/>
    <property type="match status" value="1"/>
</dbReference>
<dbReference type="PROSITE" id="PS00152">
    <property type="entry name" value="ATPASE_ALPHA_BETA"/>
    <property type="match status" value="1"/>
</dbReference>
<proteinExistence type="inferred from homology"/>
<name>ATPA_STAA1</name>
<evidence type="ECO:0000255" key="1">
    <source>
        <dbReference type="HAMAP-Rule" id="MF_01346"/>
    </source>
</evidence>
<protein>
    <recommendedName>
        <fullName evidence="1">ATP synthase subunit alpha</fullName>
        <ecNumber evidence="1">7.1.2.2</ecNumber>
    </recommendedName>
    <alternativeName>
        <fullName evidence="1">ATP synthase F1 sector subunit alpha</fullName>
    </alternativeName>
    <alternativeName>
        <fullName evidence="1">F-ATPase subunit alpha</fullName>
    </alternativeName>
</protein>
<keyword id="KW-0066">ATP synthesis</keyword>
<keyword id="KW-0067">ATP-binding</keyword>
<keyword id="KW-1003">Cell membrane</keyword>
<keyword id="KW-0139">CF(1)</keyword>
<keyword id="KW-0375">Hydrogen ion transport</keyword>
<keyword id="KW-0406">Ion transport</keyword>
<keyword id="KW-0472">Membrane</keyword>
<keyword id="KW-0547">Nucleotide-binding</keyword>
<keyword id="KW-1278">Translocase</keyword>
<keyword id="KW-0813">Transport</keyword>
<sequence>MAIKAEEISALLRSQIENYESEMSVTDVGTVLQIGDGIALIHGLNDVMAGELVEFHNGVLGLAQNLEESNVGVVILGPYTGITEGDEVKRTGRIMEVPVGEELIGRVVNPLGQPIDGQGPINTTKTRPVEKKATGVMDRKSVDEPLQTGIKAIDALVPIGRGQRELIIGDRQTGKTTIAIDTILNQKDQGTICIYVAIGQKDSTVRANVEKLRQAGALDYTIVVAASASEPSPLLYIAPYSGVTMGEEFMFNGKHVLIVYDDLTKQAAAYRELSLLLRRPPGREAYPGDVFYLHSRLLERAAKLNDDLGGGSITALPIIETQAGDISAYVPTNVISITDGQIFLQSDLFFSGVRPAINAGQSVSRVGGSAQIKAMKKVAGTLRLDLASYRELESFAQFGSDLDEFTASKLERGKRTVEVLKQDQNKPLPVEHQVLIIYALTKGYLDDIPVVDITRFEDELNHWAESNATELLNEIRETGGLPDAEKFDTAINEFKKSFSKSE</sequence>
<feature type="chain" id="PRO_1000055085" description="ATP synthase subunit alpha">
    <location>
        <begin position="1"/>
        <end position="502"/>
    </location>
</feature>
<feature type="binding site" evidence="1">
    <location>
        <begin position="169"/>
        <end position="176"/>
    </location>
    <ligand>
        <name>ATP</name>
        <dbReference type="ChEBI" id="CHEBI:30616"/>
    </ligand>
</feature>
<feature type="site" description="Required for activity" evidence="1">
    <location>
        <position position="362"/>
    </location>
</feature>
<reference key="1">
    <citation type="journal article" date="2008" name="Antimicrob. Agents Chemother.">
        <title>Mutated response regulator graR is responsible for phenotypic conversion of Staphylococcus aureus from heterogeneous vancomycin-intermediate resistance to vancomycin-intermediate resistance.</title>
        <authorList>
            <person name="Neoh H.-M."/>
            <person name="Cui L."/>
            <person name="Yuzawa H."/>
            <person name="Takeuchi F."/>
            <person name="Matsuo M."/>
            <person name="Hiramatsu K."/>
        </authorList>
    </citation>
    <scope>NUCLEOTIDE SEQUENCE [LARGE SCALE GENOMIC DNA]</scope>
    <source>
        <strain>Mu3 / ATCC 700698</strain>
    </source>
</reference>
<comment type="function">
    <text evidence="1">Produces ATP from ADP in the presence of a proton gradient across the membrane. The alpha chain is a regulatory subunit.</text>
</comment>
<comment type="catalytic activity">
    <reaction evidence="1">
        <text>ATP + H2O + 4 H(+)(in) = ADP + phosphate + 5 H(+)(out)</text>
        <dbReference type="Rhea" id="RHEA:57720"/>
        <dbReference type="ChEBI" id="CHEBI:15377"/>
        <dbReference type="ChEBI" id="CHEBI:15378"/>
        <dbReference type="ChEBI" id="CHEBI:30616"/>
        <dbReference type="ChEBI" id="CHEBI:43474"/>
        <dbReference type="ChEBI" id="CHEBI:456216"/>
        <dbReference type="EC" id="7.1.2.2"/>
    </reaction>
</comment>
<comment type="subunit">
    <text evidence="1">F-type ATPases have 2 components, CF(1) - the catalytic core - and CF(0) - the membrane proton channel. CF(1) has five subunits: alpha(3), beta(3), gamma(1), delta(1), epsilon(1). CF(0) has three main subunits: a(1), b(2) and c(9-12). The alpha and beta chains form an alternating ring which encloses part of the gamma chain. CF(1) is attached to CF(0) by a central stalk formed by the gamma and epsilon chains, while a peripheral stalk is formed by the delta and b chains.</text>
</comment>
<comment type="subcellular location">
    <subcellularLocation>
        <location evidence="1">Cell membrane</location>
        <topology evidence="1">Peripheral membrane protein</topology>
    </subcellularLocation>
</comment>
<comment type="similarity">
    <text evidence="1">Belongs to the ATPase alpha/beta chains family.</text>
</comment>
<gene>
    <name evidence="1" type="primary">atpA</name>
    <name type="ordered locus">SAHV_2089</name>
</gene>
<accession>A7X4U5</accession>